<name>RS11_PARM1</name>
<reference key="1">
    <citation type="journal article" date="2005" name="DNA Res.">
        <title>Complete genome sequence of the facultative anaerobic magnetotactic bacterium Magnetospirillum sp. strain AMB-1.</title>
        <authorList>
            <person name="Matsunaga T."/>
            <person name="Okamura Y."/>
            <person name="Fukuda Y."/>
            <person name="Wahyudi A.T."/>
            <person name="Murase Y."/>
            <person name="Takeyama H."/>
        </authorList>
    </citation>
    <scope>NUCLEOTIDE SEQUENCE [LARGE SCALE GENOMIC DNA]</scope>
    <source>
        <strain>ATCC 700264 / AMB-1</strain>
    </source>
</reference>
<dbReference type="EMBL" id="AP007255">
    <property type="protein sequence ID" value="BAE51913.1"/>
    <property type="molecule type" value="Genomic_DNA"/>
</dbReference>
<dbReference type="RefSeq" id="WP_002725469.1">
    <property type="nucleotide sequence ID" value="NC_007626.1"/>
</dbReference>
<dbReference type="SMR" id="Q2W2L2"/>
<dbReference type="STRING" id="342108.amb3109"/>
<dbReference type="KEGG" id="mag:amb3109"/>
<dbReference type="HOGENOM" id="CLU_072439_5_0_5"/>
<dbReference type="OrthoDB" id="9806415at2"/>
<dbReference type="Proteomes" id="UP000007058">
    <property type="component" value="Chromosome"/>
</dbReference>
<dbReference type="GO" id="GO:1990904">
    <property type="term" value="C:ribonucleoprotein complex"/>
    <property type="evidence" value="ECO:0007669"/>
    <property type="project" value="UniProtKB-KW"/>
</dbReference>
<dbReference type="GO" id="GO:0005840">
    <property type="term" value="C:ribosome"/>
    <property type="evidence" value="ECO:0007669"/>
    <property type="project" value="UniProtKB-KW"/>
</dbReference>
<dbReference type="GO" id="GO:0019843">
    <property type="term" value="F:rRNA binding"/>
    <property type="evidence" value="ECO:0007669"/>
    <property type="project" value="UniProtKB-UniRule"/>
</dbReference>
<dbReference type="GO" id="GO:0003735">
    <property type="term" value="F:structural constituent of ribosome"/>
    <property type="evidence" value="ECO:0007669"/>
    <property type="project" value="InterPro"/>
</dbReference>
<dbReference type="GO" id="GO:0006412">
    <property type="term" value="P:translation"/>
    <property type="evidence" value="ECO:0007669"/>
    <property type="project" value="UniProtKB-UniRule"/>
</dbReference>
<dbReference type="FunFam" id="3.30.420.80:FF:000001">
    <property type="entry name" value="30S ribosomal protein S11"/>
    <property type="match status" value="1"/>
</dbReference>
<dbReference type="Gene3D" id="3.30.420.80">
    <property type="entry name" value="Ribosomal protein S11"/>
    <property type="match status" value="1"/>
</dbReference>
<dbReference type="HAMAP" id="MF_01310">
    <property type="entry name" value="Ribosomal_uS11"/>
    <property type="match status" value="1"/>
</dbReference>
<dbReference type="InterPro" id="IPR001971">
    <property type="entry name" value="Ribosomal_uS11"/>
</dbReference>
<dbReference type="InterPro" id="IPR019981">
    <property type="entry name" value="Ribosomal_uS11_bac-type"/>
</dbReference>
<dbReference type="InterPro" id="IPR018102">
    <property type="entry name" value="Ribosomal_uS11_CS"/>
</dbReference>
<dbReference type="InterPro" id="IPR036967">
    <property type="entry name" value="Ribosomal_uS11_sf"/>
</dbReference>
<dbReference type="NCBIfam" id="NF003698">
    <property type="entry name" value="PRK05309.1"/>
    <property type="match status" value="1"/>
</dbReference>
<dbReference type="NCBIfam" id="TIGR03632">
    <property type="entry name" value="uS11_bact"/>
    <property type="match status" value="1"/>
</dbReference>
<dbReference type="PANTHER" id="PTHR11759">
    <property type="entry name" value="40S RIBOSOMAL PROTEIN S14/30S RIBOSOMAL PROTEIN S11"/>
    <property type="match status" value="1"/>
</dbReference>
<dbReference type="Pfam" id="PF00411">
    <property type="entry name" value="Ribosomal_S11"/>
    <property type="match status" value="1"/>
</dbReference>
<dbReference type="PIRSF" id="PIRSF002131">
    <property type="entry name" value="Ribosomal_S11"/>
    <property type="match status" value="1"/>
</dbReference>
<dbReference type="SUPFAM" id="SSF53137">
    <property type="entry name" value="Translational machinery components"/>
    <property type="match status" value="1"/>
</dbReference>
<dbReference type="PROSITE" id="PS00054">
    <property type="entry name" value="RIBOSOMAL_S11"/>
    <property type="match status" value="1"/>
</dbReference>
<feature type="chain" id="PRO_0000294787" description="Small ribosomal subunit protein uS11">
    <location>
        <begin position="1"/>
        <end position="131"/>
    </location>
</feature>
<proteinExistence type="inferred from homology"/>
<keyword id="KW-0687">Ribonucleoprotein</keyword>
<keyword id="KW-0689">Ribosomal protein</keyword>
<keyword id="KW-0694">RNA-binding</keyword>
<keyword id="KW-0699">rRNA-binding</keyword>
<protein>
    <recommendedName>
        <fullName evidence="1">Small ribosomal subunit protein uS11</fullName>
    </recommendedName>
    <alternativeName>
        <fullName evidence="2">30S ribosomal protein S11</fullName>
    </alternativeName>
</protein>
<gene>
    <name evidence="1" type="primary">rpsK</name>
    <name type="ordered locus">amb3109</name>
</gene>
<comment type="function">
    <text evidence="1">Located on the platform of the 30S subunit, it bridges several disparate RNA helices of the 16S rRNA. Forms part of the Shine-Dalgarno cleft in the 70S ribosome.</text>
</comment>
<comment type="subunit">
    <text evidence="1">Part of the 30S ribosomal subunit. Interacts with proteins S7 and S18. Binds to IF-3.</text>
</comment>
<comment type="similarity">
    <text evidence="1">Belongs to the universal ribosomal protein uS11 family.</text>
</comment>
<sequence length="131" mass="14124">MAKPAAAARPRRRERKNITSGVAHVNATFNNTMITITDAQGNTISWSSAGMQGFKGSRKSTPYAAQVAAEDAGRKASEHGMRTLEVEVKGPGAGRESALRALQAVGFQITSIRDVTPIPHNGCRPRKRRRV</sequence>
<accession>Q2W2L2</accession>
<organism>
    <name type="scientific">Paramagnetospirillum magneticum (strain ATCC 700264 / AMB-1)</name>
    <name type="common">Magnetospirillum magneticum</name>
    <dbReference type="NCBI Taxonomy" id="342108"/>
    <lineage>
        <taxon>Bacteria</taxon>
        <taxon>Pseudomonadati</taxon>
        <taxon>Pseudomonadota</taxon>
        <taxon>Alphaproteobacteria</taxon>
        <taxon>Rhodospirillales</taxon>
        <taxon>Magnetospirillaceae</taxon>
        <taxon>Paramagnetospirillum</taxon>
    </lineage>
</organism>
<evidence type="ECO:0000255" key="1">
    <source>
        <dbReference type="HAMAP-Rule" id="MF_01310"/>
    </source>
</evidence>
<evidence type="ECO:0000305" key="2"/>